<name>TIG_STRAW</name>
<sequence length="463" mass="50615">MKSAVETLNPTRVRLTVEVPFEELKDSLDAAYKKINQQVTVKGFRKGKIPARVIDQRFGRGAVLEEAVNDALPKFYTEAVNEAELNPLGQPEVDITELKDGETLNFTAEVDVRPTIEIPDYSGIEVEVDAVEVSDEDVEKAVTELRERFASTSPVERAAEDGDVVTLDLEAKVDGEVLEDGVAEGVSYTIGSGELLDGIDDAVKGLEAGGETTFTSELKGGSAAGKEAEVTVKVSQVAARELPELDDDFAQLASEFDTLEELKADSRKRLENMKQYDQATQAQERVLEKLLELAEVPVPEKLLEDEINTRKHNLEHHQLGQMGLDLEKYLEIQGKTVEEFDAETKEAAVKGIKTQFVLDELVNKEKLNVNQEELTEHLMRRAASSGMSPDQFAQAVVEGGQVPMLVGEVARGKALAVVVEAATVKDTNGEIVDLDDEDETESTPETTEAAEAAEESTEDKPEA</sequence>
<dbReference type="EC" id="5.2.1.8" evidence="1"/>
<dbReference type="EMBL" id="BA000030">
    <property type="protein sequence ID" value="BAC73158.1"/>
    <property type="molecule type" value="Genomic_DNA"/>
</dbReference>
<dbReference type="RefSeq" id="WP_010986848.1">
    <property type="nucleotide sequence ID" value="NZ_JZJK01000066.1"/>
</dbReference>
<dbReference type="SMR" id="Q82CA7"/>
<dbReference type="GeneID" id="41542538"/>
<dbReference type="KEGG" id="sma:SAVERM_5446"/>
<dbReference type="eggNOG" id="COG0544">
    <property type="taxonomic scope" value="Bacteria"/>
</dbReference>
<dbReference type="HOGENOM" id="CLU_033058_3_0_11"/>
<dbReference type="OrthoDB" id="9767721at2"/>
<dbReference type="Proteomes" id="UP000000428">
    <property type="component" value="Chromosome"/>
</dbReference>
<dbReference type="GO" id="GO:0005737">
    <property type="term" value="C:cytoplasm"/>
    <property type="evidence" value="ECO:0007669"/>
    <property type="project" value="UniProtKB-SubCell"/>
</dbReference>
<dbReference type="GO" id="GO:0003755">
    <property type="term" value="F:peptidyl-prolyl cis-trans isomerase activity"/>
    <property type="evidence" value="ECO:0007669"/>
    <property type="project" value="UniProtKB-UniRule"/>
</dbReference>
<dbReference type="GO" id="GO:0044183">
    <property type="term" value="F:protein folding chaperone"/>
    <property type="evidence" value="ECO:0007669"/>
    <property type="project" value="TreeGrafter"/>
</dbReference>
<dbReference type="GO" id="GO:0043022">
    <property type="term" value="F:ribosome binding"/>
    <property type="evidence" value="ECO:0007669"/>
    <property type="project" value="TreeGrafter"/>
</dbReference>
<dbReference type="GO" id="GO:0051083">
    <property type="term" value="P:'de novo' cotranslational protein folding"/>
    <property type="evidence" value="ECO:0007669"/>
    <property type="project" value="TreeGrafter"/>
</dbReference>
<dbReference type="GO" id="GO:0051301">
    <property type="term" value="P:cell division"/>
    <property type="evidence" value="ECO:0007669"/>
    <property type="project" value="UniProtKB-KW"/>
</dbReference>
<dbReference type="GO" id="GO:0061077">
    <property type="term" value="P:chaperone-mediated protein folding"/>
    <property type="evidence" value="ECO:0007669"/>
    <property type="project" value="TreeGrafter"/>
</dbReference>
<dbReference type="GO" id="GO:0015031">
    <property type="term" value="P:protein transport"/>
    <property type="evidence" value="ECO:0007669"/>
    <property type="project" value="UniProtKB-UniRule"/>
</dbReference>
<dbReference type="GO" id="GO:0043335">
    <property type="term" value="P:protein unfolding"/>
    <property type="evidence" value="ECO:0007669"/>
    <property type="project" value="TreeGrafter"/>
</dbReference>
<dbReference type="FunFam" id="3.10.50.40:FF:000019">
    <property type="entry name" value="Trigger factor"/>
    <property type="match status" value="1"/>
</dbReference>
<dbReference type="FunFam" id="3.30.70.1050:FF:000003">
    <property type="entry name" value="Trigger factor"/>
    <property type="match status" value="1"/>
</dbReference>
<dbReference type="Gene3D" id="3.10.50.40">
    <property type="match status" value="1"/>
</dbReference>
<dbReference type="Gene3D" id="3.30.70.1050">
    <property type="entry name" value="Trigger factor ribosome-binding domain"/>
    <property type="match status" value="1"/>
</dbReference>
<dbReference type="Gene3D" id="1.10.3120.10">
    <property type="entry name" value="Trigger factor, C-terminal domain"/>
    <property type="match status" value="1"/>
</dbReference>
<dbReference type="HAMAP" id="MF_00303">
    <property type="entry name" value="Trigger_factor_Tig"/>
    <property type="match status" value="1"/>
</dbReference>
<dbReference type="InterPro" id="IPR046357">
    <property type="entry name" value="PPIase_dom_sf"/>
</dbReference>
<dbReference type="InterPro" id="IPR001179">
    <property type="entry name" value="PPIase_FKBP_dom"/>
</dbReference>
<dbReference type="InterPro" id="IPR005215">
    <property type="entry name" value="Trig_fac"/>
</dbReference>
<dbReference type="InterPro" id="IPR008880">
    <property type="entry name" value="Trigger_fac_C"/>
</dbReference>
<dbReference type="InterPro" id="IPR037041">
    <property type="entry name" value="Trigger_fac_C_sf"/>
</dbReference>
<dbReference type="InterPro" id="IPR008881">
    <property type="entry name" value="Trigger_fac_ribosome-bd_bac"/>
</dbReference>
<dbReference type="InterPro" id="IPR036611">
    <property type="entry name" value="Trigger_fac_ribosome-bd_sf"/>
</dbReference>
<dbReference type="InterPro" id="IPR027304">
    <property type="entry name" value="Trigger_fact/SurA_dom_sf"/>
</dbReference>
<dbReference type="NCBIfam" id="TIGR00115">
    <property type="entry name" value="tig"/>
    <property type="match status" value="1"/>
</dbReference>
<dbReference type="PANTHER" id="PTHR30560">
    <property type="entry name" value="TRIGGER FACTOR CHAPERONE AND PEPTIDYL-PROLYL CIS/TRANS ISOMERASE"/>
    <property type="match status" value="1"/>
</dbReference>
<dbReference type="PANTHER" id="PTHR30560:SF3">
    <property type="entry name" value="TRIGGER FACTOR-LIKE PROTEIN TIG, CHLOROPLASTIC"/>
    <property type="match status" value="1"/>
</dbReference>
<dbReference type="Pfam" id="PF00254">
    <property type="entry name" value="FKBP_C"/>
    <property type="match status" value="1"/>
</dbReference>
<dbReference type="Pfam" id="PF05698">
    <property type="entry name" value="Trigger_C"/>
    <property type="match status" value="1"/>
</dbReference>
<dbReference type="Pfam" id="PF05697">
    <property type="entry name" value="Trigger_N"/>
    <property type="match status" value="1"/>
</dbReference>
<dbReference type="PIRSF" id="PIRSF003095">
    <property type="entry name" value="Trigger_factor"/>
    <property type="match status" value="1"/>
</dbReference>
<dbReference type="SUPFAM" id="SSF54534">
    <property type="entry name" value="FKBP-like"/>
    <property type="match status" value="1"/>
</dbReference>
<dbReference type="SUPFAM" id="SSF109998">
    <property type="entry name" value="Triger factor/SurA peptide-binding domain-like"/>
    <property type="match status" value="1"/>
</dbReference>
<dbReference type="SUPFAM" id="SSF102735">
    <property type="entry name" value="Trigger factor ribosome-binding domain"/>
    <property type="match status" value="1"/>
</dbReference>
<dbReference type="PROSITE" id="PS50059">
    <property type="entry name" value="FKBP_PPIASE"/>
    <property type="match status" value="1"/>
</dbReference>
<reference key="1">
    <citation type="journal article" date="2001" name="Proc. Natl. Acad. Sci. U.S.A.">
        <title>Genome sequence of an industrial microorganism Streptomyces avermitilis: deducing the ability of producing secondary metabolites.</title>
        <authorList>
            <person name="Omura S."/>
            <person name="Ikeda H."/>
            <person name="Ishikawa J."/>
            <person name="Hanamoto A."/>
            <person name="Takahashi C."/>
            <person name="Shinose M."/>
            <person name="Takahashi Y."/>
            <person name="Horikawa H."/>
            <person name="Nakazawa H."/>
            <person name="Osonoe T."/>
            <person name="Kikuchi H."/>
            <person name="Shiba T."/>
            <person name="Sakaki Y."/>
            <person name="Hattori M."/>
        </authorList>
    </citation>
    <scope>NUCLEOTIDE SEQUENCE [LARGE SCALE GENOMIC DNA]</scope>
    <source>
        <strain>ATCC 31267 / DSM 46492 / JCM 5070 / NBRC 14893 / NCIMB 12804 / NRRL 8165 / MA-4680</strain>
    </source>
</reference>
<reference key="2">
    <citation type="journal article" date="2003" name="Nat. Biotechnol.">
        <title>Complete genome sequence and comparative analysis of the industrial microorganism Streptomyces avermitilis.</title>
        <authorList>
            <person name="Ikeda H."/>
            <person name="Ishikawa J."/>
            <person name="Hanamoto A."/>
            <person name="Shinose M."/>
            <person name="Kikuchi H."/>
            <person name="Shiba T."/>
            <person name="Sakaki Y."/>
            <person name="Hattori M."/>
            <person name="Omura S."/>
        </authorList>
    </citation>
    <scope>NUCLEOTIDE SEQUENCE [LARGE SCALE GENOMIC DNA]</scope>
    <source>
        <strain>ATCC 31267 / DSM 46492 / JCM 5070 / NBRC 14893 / NCIMB 12804 / NRRL 8165 / MA-4680</strain>
    </source>
</reference>
<accession>Q82CA7</accession>
<keyword id="KW-0131">Cell cycle</keyword>
<keyword id="KW-0132">Cell division</keyword>
<keyword id="KW-0143">Chaperone</keyword>
<keyword id="KW-0963">Cytoplasm</keyword>
<keyword id="KW-0413">Isomerase</keyword>
<keyword id="KW-1185">Reference proteome</keyword>
<keyword id="KW-0697">Rotamase</keyword>
<feature type="chain" id="PRO_0000179435" description="Trigger factor">
    <location>
        <begin position="1"/>
        <end position="463"/>
    </location>
</feature>
<feature type="domain" description="PPIase FKBP-type" evidence="1">
    <location>
        <begin position="162"/>
        <end position="243"/>
    </location>
</feature>
<feature type="region of interest" description="Disordered" evidence="2">
    <location>
        <begin position="427"/>
        <end position="463"/>
    </location>
</feature>
<feature type="compositionally biased region" description="Acidic residues" evidence="2">
    <location>
        <begin position="432"/>
        <end position="442"/>
    </location>
</feature>
<gene>
    <name evidence="1" type="primary">tig</name>
    <name type="ordered locus">SAV_5446</name>
</gene>
<protein>
    <recommendedName>
        <fullName evidence="1">Trigger factor</fullName>
        <shortName evidence="1">TF</shortName>
        <ecNumber evidence="1">5.2.1.8</ecNumber>
    </recommendedName>
    <alternativeName>
        <fullName evidence="1">PPIase</fullName>
    </alternativeName>
</protein>
<organism>
    <name type="scientific">Streptomyces avermitilis (strain ATCC 31267 / DSM 46492 / JCM 5070 / NBRC 14893 / NCIMB 12804 / NRRL 8165 / MA-4680)</name>
    <dbReference type="NCBI Taxonomy" id="227882"/>
    <lineage>
        <taxon>Bacteria</taxon>
        <taxon>Bacillati</taxon>
        <taxon>Actinomycetota</taxon>
        <taxon>Actinomycetes</taxon>
        <taxon>Kitasatosporales</taxon>
        <taxon>Streptomycetaceae</taxon>
        <taxon>Streptomyces</taxon>
    </lineage>
</organism>
<comment type="function">
    <text evidence="1">Involved in protein export. Acts as a chaperone by maintaining the newly synthesized protein in an open conformation. Functions as a peptidyl-prolyl cis-trans isomerase.</text>
</comment>
<comment type="catalytic activity">
    <reaction evidence="1">
        <text>[protein]-peptidylproline (omega=180) = [protein]-peptidylproline (omega=0)</text>
        <dbReference type="Rhea" id="RHEA:16237"/>
        <dbReference type="Rhea" id="RHEA-COMP:10747"/>
        <dbReference type="Rhea" id="RHEA-COMP:10748"/>
        <dbReference type="ChEBI" id="CHEBI:83833"/>
        <dbReference type="ChEBI" id="CHEBI:83834"/>
        <dbReference type="EC" id="5.2.1.8"/>
    </reaction>
</comment>
<comment type="subcellular location">
    <subcellularLocation>
        <location>Cytoplasm</location>
    </subcellularLocation>
    <text evidence="1">About half TF is bound to the ribosome near the polypeptide exit tunnel while the other half is free in the cytoplasm.</text>
</comment>
<comment type="domain">
    <text evidence="1">Consists of 3 domains; the N-terminus binds the ribosome, the middle domain has PPIase activity, while the C-terminus has intrinsic chaperone activity on its own.</text>
</comment>
<comment type="similarity">
    <text evidence="1">Belongs to the FKBP-type PPIase family. Tig subfamily.</text>
</comment>
<proteinExistence type="inferred from homology"/>
<evidence type="ECO:0000255" key="1">
    <source>
        <dbReference type="HAMAP-Rule" id="MF_00303"/>
    </source>
</evidence>
<evidence type="ECO:0000256" key="2">
    <source>
        <dbReference type="SAM" id="MobiDB-lite"/>
    </source>
</evidence>